<name>THI4_ARCFU</name>
<sequence>MPLKFTEVMEAEITKAIVETASEEWVEYAESDVIVVGAGPSGLTAARYLAEKGLKTLVLERRLSFGGGIGGGGMLFHKVVVEREAKDILDDFGIRYTEHRNFLVADSAEFMAKLAAKAIDAGAKIIHGVSVEDVIFRDDPLGVRGVCIQWSAVEISGLHVDPLFLRSRAVVDATGHDAEVISVAARKIPLEVSVVGERSAYSEVAEREIVEKTGKIVKGLYAAGMAVAAVHNLPRMGPIFGGMLLSGKKVAEIVAEDLKL</sequence>
<accession>O29556</accession>
<proteinExistence type="inferred from homology"/>
<keyword id="KW-0408">Iron</keyword>
<keyword id="KW-0479">Metal-binding</keyword>
<keyword id="KW-0520">NAD</keyword>
<keyword id="KW-1185">Reference proteome</keyword>
<keyword id="KW-0784">Thiamine biosynthesis</keyword>
<keyword id="KW-0808">Transferase</keyword>
<feature type="chain" id="PRO_0000153944" description="Thiamine thiazole synthase">
    <location>
        <begin position="1"/>
        <end position="260"/>
    </location>
</feature>
<feature type="binding site" description="in other chain" evidence="1">
    <location>
        <position position="41"/>
    </location>
    <ligand>
        <name>NAD(+)</name>
        <dbReference type="ChEBI" id="CHEBI:57540"/>
        <note>ligand shared between two adjacent protomers</note>
    </ligand>
</feature>
<feature type="binding site" description="in other chain" evidence="1">
    <location>
        <begin position="60"/>
        <end position="61"/>
    </location>
    <ligand>
        <name>NAD(+)</name>
        <dbReference type="ChEBI" id="CHEBI:57540"/>
        <note>ligand shared between two adjacent protomers</note>
    </ligand>
</feature>
<feature type="binding site" description="in other chain" evidence="1">
    <location>
        <position position="68"/>
    </location>
    <ligand>
        <name>NAD(+)</name>
        <dbReference type="ChEBI" id="CHEBI:57540"/>
        <note>ligand shared between two adjacent protomers</note>
    </ligand>
</feature>
<feature type="binding site" description="in other chain" evidence="1">
    <location>
        <position position="131"/>
    </location>
    <ligand>
        <name>NAD(+)</name>
        <dbReference type="ChEBI" id="CHEBI:57540"/>
        <note>ligand shared between two adjacent protomers</note>
    </ligand>
</feature>
<feature type="binding site" evidence="1">
    <location>
        <begin position="159"/>
        <end position="161"/>
    </location>
    <ligand>
        <name>NAD(+)</name>
        <dbReference type="ChEBI" id="CHEBI:57540"/>
        <note>ligand shared between two adjacent protomers</note>
    </ligand>
</feature>
<feature type="binding site" evidence="1">
    <location>
        <position position="161"/>
    </location>
    <ligand>
        <name>Fe cation</name>
        <dbReference type="ChEBI" id="CHEBI:24875"/>
        <note>ligand shared between two adjacent protomers</note>
    </ligand>
</feature>
<feature type="binding site" description="in other chain" evidence="1">
    <location>
        <position position="176"/>
    </location>
    <ligand>
        <name>Fe cation</name>
        <dbReference type="ChEBI" id="CHEBI:24875"/>
        <note>ligand shared between two adjacent protomers</note>
    </ligand>
</feature>
<feature type="binding site" description="in other chain" evidence="1">
    <location>
        <position position="225"/>
    </location>
    <ligand>
        <name>NAD(+)</name>
        <dbReference type="ChEBI" id="CHEBI:57540"/>
        <note>ligand shared between two adjacent protomers</note>
    </ligand>
</feature>
<feature type="binding site" evidence="1">
    <location>
        <position position="235"/>
    </location>
    <ligand>
        <name>glycine</name>
        <dbReference type="ChEBI" id="CHEBI:57305"/>
    </ligand>
</feature>
<comment type="function">
    <text evidence="1">Involved in the biosynthesis of the thiazole moiety of thiamine. Catalyzes the conversion of NAD and glycine to adenosine diphosphate 5-(2-hydroxyethyl)-4-methylthiazole-2-carboxylate (ADT), an adenylated thiazole intermediate, using free sulfide as a source of sulfur.</text>
</comment>
<comment type="catalytic activity">
    <reaction evidence="1">
        <text>hydrogen sulfide + glycine + NAD(+) = ADP-5-ethyl-4-methylthiazole-2-carboxylate + nicotinamide + 3 H2O + H(+)</text>
        <dbReference type="Rhea" id="RHEA:55704"/>
        <dbReference type="ChEBI" id="CHEBI:15377"/>
        <dbReference type="ChEBI" id="CHEBI:15378"/>
        <dbReference type="ChEBI" id="CHEBI:17154"/>
        <dbReference type="ChEBI" id="CHEBI:29919"/>
        <dbReference type="ChEBI" id="CHEBI:57305"/>
        <dbReference type="ChEBI" id="CHEBI:57540"/>
        <dbReference type="ChEBI" id="CHEBI:139151"/>
        <dbReference type="EC" id="2.4.2.59"/>
    </reaction>
</comment>
<comment type="cofactor">
    <cofactor evidence="1">
        <name>Fe(2+)</name>
        <dbReference type="ChEBI" id="CHEBI:29033"/>
    </cofactor>
</comment>
<comment type="pathway">
    <text evidence="1">Cofactor biosynthesis; thiamine diphosphate biosynthesis.</text>
</comment>
<comment type="subunit">
    <text evidence="1">Homooctamer; tetramer of dimers.</text>
</comment>
<comment type="similarity">
    <text evidence="1">Belongs to the THI4 family.</text>
</comment>
<reference key="1">
    <citation type="journal article" date="1997" name="Nature">
        <title>The complete genome sequence of the hyperthermophilic, sulphate-reducing archaeon Archaeoglobus fulgidus.</title>
        <authorList>
            <person name="Klenk H.-P."/>
            <person name="Clayton R.A."/>
            <person name="Tomb J.-F."/>
            <person name="White O."/>
            <person name="Nelson K.E."/>
            <person name="Ketchum K.A."/>
            <person name="Dodson R.J."/>
            <person name="Gwinn M.L."/>
            <person name="Hickey E.K."/>
            <person name="Peterson J.D."/>
            <person name="Richardson D.L."/>
            <person name="Kerlavage A.R."/>
            <person name="Graham D.E."/>
            <person name="Kyrpides N.C."/>
            <person name="Fleischmann R.D."/>
            <person name="Quackenbush J."/>
            <person name="Lee N.H."/>
            <person name="Sutton G.G."/>
            <person name="Gill S.R."/>
            <person name="Kirkness E.F."/>
            <person name="Dougherty B.A."/>
            <person name="McKenney K."/>
            <person name="Adams M.D."/>
            <person name="Loftus B.J."/>
            <person name="Peterson S.N."/>
            <person name="Reich C.I."/>
            <person name="McNeil L.K."/>
            <person name="Badger J.H."/>
            <person name="Glodek A."/>
            <person name="Zhou L."/>
            <person name="Overbeek R."/>
            <person name="Gocayne J.D."/>
            <person name="Weidman J.F."/>
            <person name="McDonald L.A."/>
            <person name="Utterback T.R."/>
            <person name="Cotton M.D."/>
            <person name="Spriggs T."/>
            <person name="Artiach P."/>
            <person name="Kaine B.P."/>
            <person name="Sykes S.M."/>
            <person name="Sadow P.W."/>
            <person name="D'Andrea K.P."/>
            <person name="Bowman C."/>
            <person name="Fujii C."/>
            <person name="Garland S.A."/>
            <person name="Mason T.M."/>
            <person name="Olsen G.J."/>
            <person name="Fraser C.M."/>
            <person name="Smith H.O."/>
            <person name="Woese C.R."/>
            <person name="Venter J.C."/>
        </authorList>
    </citation>
    <scope>NUCLEOTIDE SEQUENCE [LARGE SCALE GENOMIC DNA]</scope>
    <source>
        <strain>ATCC 49558 / DSM 4304 / JCM 9628 / NBRC 100126 / VC-16</strain>
    </source>
</reference>
<gene>
    <name evidence="1" type="primary">thi4</name>
    <name type="ordered locus">AF_0702</name>
</gene>
<evidence type="ECO:0000255" key="1">
    <source>
        <dbReference type="HAMAP-Rule" id="MF_00304"/>
    </source>
</evidence>
<protein>
    <recommendedName>
        <fullName evidence="1">Thiamine thiazole synthase</fullName>
        <ecNumber evidence="1">2.4.2.59</ecNumber>
    </recommendedName>
</protein>
<organism>
    <name type="scientific">Archaeoglobus fulgidus (strain ATCC 49558 / DSM 4304 / JCM 9628 / NBRC 100126 / VC-16)</name>
    <dbReference type="NCBI Taxonomy" id="224325"/>
    <lineage>
        <taxon>Archaea</taxon>
        <taxon>Methanobacteriati</taxon>
        <taxon>Methanobacteriota</taxon>
        <taxon>Archaeoglobi</taxon>
        <taxon>Archaeoglobales</taxon>
        <taxon>Archaeoglobaceae</taxon>
        <taxon>Archaeoglobus</taxon>
    </lineage>
</organism>
<dbReference type="EC" id="2.4.2.59" evidence="1"/>
<dbReference type="EMBL" id="AE000782">
    <property type="protein sequence ID" value="AAB90538.1"/>
    <property type="molecule type" value="Genomic_DNA"/>
</dbReference>
<dbReference type="PIR" id="F69337">
    <property type="entry name" value="F69337"/>
</dbReference>
<dbReference type="RefSeq" id="WP_010878205.1">
    <property type="nucleotide sequence ID" value="NC_000917.1"/>
</dbReference>
<dbReference type="SMR" id="O29556"/>
<dbReference type="STRING" id="224325.AF_0702"/>
<dbReference type="PaxDb" id="224325-AF_0702"/>
<dbReference type="EnsemblBacteria" id="AAB90538">
    <property type="protein sequence ID" value="AAB90538"/>
    <property type="gene ID" value="AF_0702"/>
</dbReference>
<dbReference type="KEGG" id="afu:AF_0702"/>
<dbReference type="eggNOG" id="arCOG00574">
    <property type="taxonomic scope" value="Archaea"/>
</dbReference>
<dbReference type="HOGENOM" id="CLU_053727_2_0_2"/>
<dbReference type="OrthoDB" id="4240at2157"/>
<dbReference type="PhylomeDB" id="O29556"/>
<dbReference type="UniPathway" id="UPA00060"/>
<dbReference type="Proteomes" id="UP000002199">
    <property type="component" value="Chromosome"/>
</dbReference>
<dbReference type="GO" id="GO:0005506">
    <property type="term" value="F:iron ion binding"/>
    <property type="evidence" value="ECO:0007669"/>
    <property type="project" value="UniProtKB-UniRule"/>
</dbReference>
<dbReference type="GO" id="GO:0016763">
    <property type="term" value="F:pentosyltransferase activity"/>
    <property type="evidence" value="ECO:0007669"/>
    <property type="project" value="UniProtKB-UniRule"/>
</dbReference>
<dbReference type="GO" id="GO:0009228">
    <property type="term" value="P:thiamine biosynthetic process"/>
    <property type="evidence" value="ECO:0007669"/>
    <property type="project" value="UniProtKB-KW"/>
</dbReference>
<dbReference type="GO" id="GO:0009229">
    <property type="term" value="P:thiamine diphosphate biosynthetic process"/>
    <property type="evidence" value="ECO:0007669"/>
    <property type="project" value="UniProtKB-UniRule"/>
</dbReference>
<dbReference type="GO" id="GO:0052837">
    <property type="term" value="P:thiazole biosynthetic process"/>
    <property type="evidence" value="ECO:0007669"/>
    <property type="project" value="UniProtKB-UniRule"/>
</dbReference>
<dbReference type="Gene3D" id="3.50.50.60">
    <property type="entry name" value="FAD/NAD(P)-binding domain"/>
    <property type="match status" value="1"/>
</dbReference>
<dbReference type="HAMAP" id="MF_00304">
    <property type="entry name" value="Thi4"/>
    <property type="match status" value="1"/>
</dbReference>
<dbReference type="InterPro" id="IPR036188">
    <property type="entry name" value="FAD/NAD-bd_sf"/>
</dbReference>
<dbReference type="InterPro" id="IPR002922">
    <property type="entry name" value="Thi4_fam"/>
</dbReference>
<dbReference type="InterPro" id="IPR022828">
    <property type="entry name" value="Thi4_prok"/>
</dbReference>
<dbReference type="NCBIfam" id="TIGR00292">
    <property type="entry name" value="sulfide-dependent adenosine diphosphate thiazole synthase"/>
    <property type="match status" value="1"/>
</dbReference>
<dbReference type="PANTHER" id="PTHR43422">
    <property type="entry name" value="THIAMINE THIAZOLE SYNTHASE"/>
    <property type="match status" value="1"/>
</dbReference>
<dbReference type="PANTHER" id="PTHR43422:SF3">
    <property type="entry name" value="THIAMINE THIAZOLE SYNTHASE"/>
    <property type="match status" value="1"/>
</dbReference>
<dbReference type="Pfam" id="PF01946">
    <property type="entry name" value="Thi4"/>
    <property type="match status" value="1"/>
</dbReference>
<dbReference type="PRINTS" id="PR00368">
    <property type="entry name" value="FADPNR"/>
</dbReference>
<dbReference type="PRINTS" id="PR00411">
    <property type="entry name" value="PNDRDTASEI"/>
</dbReference>
<dbReference type="SUPFAM" id="SSF51905">
    <property type="entry name" value="FAD/NAD(P)-binding domain"/>
    <property type="match status" value="1"/>
</dbReference>